<name>PROAB_OLEEU</name>
<keyword id="KW-0009">Actin-binding</keyword>
<keyword id="KW-0020">Allergen</keyword>
<keyword id="KW-0963">Cytoplasm</keyword>
<keyword id="KW-0206">Cytoskeleton</keyword>
<keyword id="KW-1015">Disulfide bond</keyword>
<keyword id="KW-0597">Phosphoprotein</keyword>
<protein>
    <recommendedName>
        <fullName>Profilin-3</fullName>
    </recommendedName>
    <alternativeName>
        <fullName>Pollen allergen Ole e 2</fullName>
    </alternativeName>
    <allergenName>Ole e 2</allergenName>
</protein>
<sequence length="134" mass="14383">MSWQAYVDDHLMCDIEGHEGHRLTAAAIVGHDGSVWAQSATFPQFKPEEMNGIMTDFNEPGHLAPTGLHLGGTKYMVIQGEAGAVIRGKKGSGGITIKKTGQALVCGIYEEPVTPGQCNMVVERLGDYLLEQGL</sequence>
<reference key="1">
    <citation type="journal article" date="2012" name="PLoS ONE">
        <title>Characterization of profilin polymorphism in pollen with a focus on multifunctionality.</title>
        <authorList>
            <person name="Jimenez-Lopez J.C."/>
            <person name="Morales S."/>
            <person name="Castro A.J."/>
            <person name="Volkmann D."/>
            <person name="Rodriguez-Garcia M.I."/>
            <person name="Alche Jde D."/>
        </authorList>
    </citation>
    <scope>NUCLEOTIDE SEQUENCE [MRNA]</scope>
    <scope>POLYMORPHISM</scope>
    <source>
        <strain>cv. Picudo</strain>
        <tissue>Pollen</tissue>
    </source>
</reference>
<reference key="2">
    <citation type="journal article" date="2013" name="PLoS ONE">
        <title>Analysis of the effects of polymorphism on pollen profilin structural functionality and the generation of conformational, T- and B-cell epitopes.</title>
        <authorList>
            <person name="Jimenez-Lopez J.C."/>
            <person name="Rodriguez-Garcia M.I."/>
            <person name="Alche J.D."/>
        </authorList>
    </citation>
    <scope>3D-STRUCTURE MODELING</scope>
    <scope>DISULFIDE BOND</scope>
</reference>
<evidence type="ECO:0000250" key="1"/>
<evidence type="ECO:0000305" key="2"/>
<evidence type="ECO:0000305" key="3">
    <source>
    </source>
</evidence>
<dbReference type="EMBL" id="DQ117909">
    <property type="protein sequence ID" value="AAZ30399.1"/>
    <property type="molecule type" value="mRNA"/>
</dbReference>
<dbReference type="SMR" id="P0DKE6"/>
<dbReference type="GO" id="GO:0005938">
    <property type="term" value="C:cell cortex"/>
    <property type="evidence" value="ECO:0007669"/>
    <property type="project" value="TreeGrafter"/>
</dbReference>
<dbReference type="GO" id="GO:0005856">
    <property type="term" value="C:cytoskeleton"/>
    <property type="evidence" value="ECO:0007669"/>
    <property type="project" value="UniProtKB-SubCell"/>
</dbReference>
<dbReference type="GO" id="GO:0003785">
    <property type="term" value="F:actin monomer binding"/>
    <property type="evidence" value="ECO:0007669"/>
    <property type="project" value="TreeGrafter"/>
</dbReference>
<dbReference type="CDD" id="cd00148">
    <property type="entry name" value="PROF"/>
    <property type="match status" value="1"/>
</dbReference>
<dbReference type="FunFam" id="3.30.450.30:FF:000001">
    <property type="entry name" value="Profilin"/>
    <property type="match status" value="1"/>
</dbReference>
<dbReference type="Gene3D" id="3.30.450.30">
    <property type="entry name" value="Dynein light chain 2a, cytoplasmic"/>
    <property type="match status" value="1"/>
</dbReference>
<dbReference type="InterPro" id="IPR048278">
    <property type="entry name" value="PFN"/>
</dbReference>
<dbReference type="InterPro" id="IPR005455">
    <property type="entry name" value="PFN_euk"/>
</dbReference>
<dbReference type="InterPro" id="IPR036140">
    <property type="entry name" value="PFN_sf"/>
</dbReference>
<dbReference type="InterPro" id="IPR027310">
    <property type="entry name" value="Profilin_CS"/>
</dbReference>
<dbReference type="PANTHER" id="PTHR11604">
    <property type="entry name" value="PROFILIN"/>
    <property type="match status" value="1"/>
</dbReference>
<dbReference type="PANTHER" id="PTHR11604:SF25">
    <property type="entry name" value="PROFILIN-5"/>
    <property type="match status" value="1"/>
</dbReference>
<dbReference type="Pfam" id="PF00235">
    <property type="entry name" value="Profilin"/>
    <property type="match status" value="1"/>
</dbReference>
<dbReference type="PRINTS" id="PR00392">
    <property type="entry name" value="PROFILIN"/>
</dbReference>
<dbReference type="PRINTS" id="PR01640">
    <property type="entry name" value="PROFILINPLNT"/>
</dbReference>
<dbReference type="SMART" id="SM00392">
    <property type="entry name" value="PROF"/>
    <property type="match status" value="1"/>
</dbReference>
<dbReference type="SUPFAM" id="SSF55770">
    <property type="entry name" value="Profilin (actin-binding protein)"/>
    <property type="match status" value="1"/>
</dbReference>
<dbReference type="PROSITE" id="PS00414">
    <property type="entry name" value="PROFILIN"/>
    <property type="match status" value="1"/>
</dbReference>
<feature type="initiator methionine" description="Removed" evidence="1">
    <location>
        <position position="1"/>
    </location>
</feature>
<feature type="chain" id="PRO_0000424993" description="Profilin-3">
    <location>
        <begin position="2"/>
        <end position="134"/>
    </location>
</feature>
<feature type="short sequence motif" description="Involved in PIP2 interaction">
    <location>
        <begin position="84"/>
        <end position="100"/>
    </location>
</feature>
<feature type="modified residue" description="Phosphothreonine" evidence="1">
    <location>
        <position position="114"/>
    </location>
</feature>
<feature type="disulfide bond" evidence="3">
    <location>
        <begin position="13"/>
        <end position="118"/>
    </location>
</feature>
<organism>
    <name type="scientific">Olea europaea</name>
    <name type="common">Common olive</name>
    <dbReference type="NCBI Taxonomy" id="4146"/>
    <lineage>
        <taxon>Eukaryota</taxon>
        <taxon>Viridiplantae</taxon>
        <taxon>Streptophyta</taxon>
        <taxon>Embryophyta</taxon>
        <taxon>Tracheophyta</taxon>
        <taxon>Spermatophyta</taxon>
        <taxon>Magnoliopsida</taxon>
        <taxon>eudicotyledons</taxon>
        <taxon>Gunneridae</taxon>
        <taxon>Pentapetalae</taxon>
        <taxon>asterids</taxon>
        <taxon>lamiids</taxon>
        <taxon>Lamiales</taxon>
        <taxon>Oleaceae</taxon>
        <taxon>Oleeae</taxon>
        <taxon>Olea</taxon>
    </lineage>
</organism>
<proteinExistence type="evidence at protein level"/>
<comment type="function">
    <text evidence="1">Binds to actin and affects the structure of the cytoskeleton. At high concentrations, profilin prevents the polymerization of actin, whereas it enhances it at low concentrations (By similarity).</text>
</comment>
<comment type="subunit">
    <text evidence="1">Occurs in many kinds of cells as a complex with monomeric actin in a 1:1 ratio.</text>
</comment>
<comment type="subcellular location">
    <subcellularLocation>
        <location evidence="1">Cytoplasm</location>
        <location evidence="1">Cytoskeleton</location>
    </subcellularLocation>
</comment>
<comment type="PTM">
    <text evidence="1">Phosphorylated by MAP kinases.</text>
</comment>
<comment type="polymorphism">
    <text>Several isoforms of the allergen exist due to polymorphism.</text>
</comment>
<comment type="allergen">
    <text>Causes an allergic reaction in human.</text>
</comment>
<comment type="miscellaneous">
    <text evidence="3">The variability of the residues taking part of IgE-binding epitopes might be responsible of the difference in cross-reactivity among olive pollen cultivars, and between distantly related pollen species, leading to a variable range of allergy reactions among atopic patients.</text>
</comment>
<comment type="similarity">
    <text evidence="2">Belongs to the profilin family.</text>
</comment>
<accession>P0DKE6</accession>
<accession>A4GD57</accession>